<protein>
    <recommendedName>
        <fullName>Uncharacterized protein OsI_009114</fullName>
    </recommendedName>
    <alternativeName>
        <fullName>Unknown protein AN04 from 2D-PAGE of anther</fullName>
    </alternativeName>
</protein>
<comment type="miscellaneous">
    <text>On the 2D-gel the determined pI of this unknown protein is: 5.1, its MW is: 18 kDa.</text>
</comment>
<organism>
    <name type="scientific">Oryza sativa subsp. indica</name>
    <name type="common">Rice</name>
    <dbReference type="NCBI Taxonomy" id="39946"/>
    <lineage>
        <taxon>Eukaryota</taxon>
        <taxon>Viridiplantae</taxon>
        <taxon>Streptophyta</taxon>
        <taxon>Embryophyta</taxon>
        <taxon>Tracheophyta</taxon>
        <taxon>Spermatophyta</taxon>
        <taxon>Magnoliopsida</taxon>
        <taxon>Liliopsida</taxon>
        <taxon>Poales</taxon>
        <taxon>Poaceae</taxon>
        <taxon>BOP clade</taxon>
        <taxon>Oryzoideae</taxon>
        <taxon>Oryzeae</taxon>
        <taxon>Oryzinae</taxon>
        <taxon>Oryza</taxon>
        <taxon>Oryza sativa</taxon>
    </lineage>
</organism>
<gene>
    <name type="ORF">OsI_009114</name>
</gene>
<dbReference type="EMBL" id="CM000127">
    <property type="status" value="NOT_ANNOTATED_CDS"/>
    <property type="molecule type" value="Genomic_DNA"/>
</dbReference>
<dbReference type="SMR" id="A2XAM1"/>
<dbReference type="EnsemblPlants" id="OsIR64_02g0036670.01">
    <property type="protein sequence ID" value="OsIR64_02g0036670.01"/>
    <property type="gene ID" value="OsIR64_02g0036670"/>
</dbReference>
<dbReference type="EnsemblPlants" id="OsKYG_02g0036740.01">
    <property type="protein sequence ID" value="OsKYG_02g0036740.01"/>
    <property type="gene ID" value="OsKYG_02g0036740"/>
</dbReference>
<dbReference type="EnsemblPlants" id="OsLaMu_02g0036560.01">
    <property type="protein sequence ID" value="OsLaMu_02g0036560.01"/>
    <property type="gene ID" value="OsLaMu_02g0036560"/>
</dbReference>
<dbReference type="EnsemblPlants" id="OsLaMu_02g0036570.01">
    <property type="protein sequence ID" value="OsLaMu_02g0036570.01"/>
    <property type="gene ID" value="OsLaMu_02g0036570"/>
</dbReference>
<dbReference type="EnsemblPlants" id="OsLiXu_02g0036960.01">
    <property type="protein sequence ID" value="OsLiXu_02g0036960.01"/>
    <property type="gene ID" value="OsLiXu_02g0036960"/>
</dbReference>
<dbReference type="EnsemblPlants" id="OsLiXu_02g0036970.01">
    <property type="protein sequence ID" value="OsLiXu_02g0036970.01"/>
    <property type="gene ID" value="OsLiXu_02g0036970"/>
</dbReference>
<dbReference type="EnsemblPlants" id="OsMH63_02G037220_01">
    <property type="protein sequence ID" value="OsMH63_02G037220_01"/>
    <property type="gene ID" value="OsMH63_02G037220"/>
</dbReference>
<dbReference type="EnsemblPlants" id="OsMH63_02G037230_01">
    <property type="protein sequence ID" value="OsMH63_02G037230_01"/>
    <property type="gene ID" value="OsMH63_02G037230"/>
</dbReference>
<dbReference type="EnsemblPlants" id="OsZS97_02G036520_01">
    <property type="protein sequence ID" value="OsZS97_02G036520_01"/>
    <property type="gene ID" value="OsZS97_02G036520"/>
</dbReference>
<dbReference type="Gramene" id="OsIR64_02g0036670.01">
    <property type="protein sequence ID" value="OsIR64_02g0036670.01"/>
    <property type="gene ID" value="OsIR64_02g0036670"/>
</dbReference>
<dbReference type="Gramene" id="OsKYG_02g0036740.01">
    <property type="protein sequence ID" value="OsKYG_02g0036740.01"/>
    <property type="gene ID" value="OsKYG_02g0036740"/>
</dbReference>
<dbReference type="Gramene" id="OsLaMu_02g0036560.01">
    <property type="protein sequence ID" value="OsLaMu_02g0036560.01"/>
    <property type="gene ID" value="OsLaMu_02g0036560"/>
</dbReference>
<dbReference type="Gramene" id="OsLaMu_02g0036570.01">
    <property type="protein sequence ID" value="OsLaMu_02g0036570.01"/>
    <property type="gene ID" value="OsLaMu_02g0036570"/>
</dbReference>
<dbReference type="Gramene" id="OsLiXu_02g0036960.01">
    <property type="protein sequence ID" value="OsLiXu_02g0036960.01"/>
    <property type="gene ID" value="OsLiXu_02g0036960"/>
</dbReference>
<dbReference type="Gramene" id="OsLiXu_02g0036970.01">
    <property type="protein sequence ID" value="OsLiXu_02g0036970.01"/>
    <property type="gene ID" value="OsLiXu_02g0036970"/>
</dbReference>
<dbReference type="Gramene" id="OsMH63_02G037220_01">
    <property type="protein sequence ID" value="OsMH63_02G037220_01"/>
    <property type="gene ID" value="OsMH63_02G037220"/>
</dbReference>
<dbReference type="Gramene" id="OsMH63_02G037230_01">
    <property type="protein sequence ID" value="OsMH63_02G037230_01"/>
    <property type="gene ID" value="OsMH63_02G037230"/>
</dbReference>
<dbReference type="Gramene" id="OsZS97_02G036520_01">
    <property type="protein sequence ID" value="OsZS97_02G036520_01"/>
    <property type="gene ID" value="OsZS97_02G036520"/>
</dbReference>
<dbReference type="Proteomes" id="UP000007015">
    <property type="component" value="Chromosome 2"/>
</dbReference>
<evidence type="ECO:0000305" key="1"/>
<sequence>MAQNKTIAVALLLATLVAVMGKEPETLEEALRAGCKEECSEQKKKAPIDEKQREDFCFIKTKSIFEAHKGVKDLKADRFIDFCNNECNAVYKEDPATSKKCAESCEADAKEAEVFLDKVVAYMQTTKQA</sequence>
<feature type="chain" id="PRO_0000337762" description="Uncharacterized protein OsI_009114">
    <location>
        <begin position="1"/>
        <end position="129"/>
    </location>
</feature>
<feature type="sequence conflict" description="In Ref. 2; AA sequence." evidence="1" ref="2">
    <original>F</original>
    <variation>FA</variation>
    <location>
        <position position="82"/>
    </location>
</feature>
<feature type="sequence conflict" description="In Ref. 2; AA sequence." evidence="1" ref="2">
    <original>E</original>
    <variation>EA</variation>
    <location>
        <position position="86"/>
    </location>
</feature>
<feature type="sequence conflict" description="In Ref. 2; AA sequence." evidence="1" ref="2">
    <original>NA</original>
    <variation>AN</variation>
    <location>
        <begin position="88"/>
        <end position="89"/>
    </location>
</feature>
<name>Y2551_ORYSI</name>
<reference key="1">
    <citation type="journal article" date="2005" name="PLoS Biol.">
        <title>The genomes of Oryza sativa: a history of duplications.</title>
        <authorList>
            <person name="Yu J."/>
            <person name="Wang J."/>
            <person name="Lin W."/>
            <person name="Li S."/>
            <person name="Li H."/>
            <person name="Zhou J."/>
            <person name="Ni P."/>
            <person name="Dong W."/>
            <person name="Hu S."/>
            <person name="Zeng C."/>
            <person name="Zhang J."/>
            <person name="Zhang Y."/>
            <person name="Li R."/>
            <person name="Xu Z."/>
            <person name="Li S."/>
            <person name="Li X."/>
            <person name="Zheng H."/>
            <person name="Cong L."/>
            <person name="Lin L."/>
            <person name="Yin J."/>
            <person name="Geng J."/>
            <person name="Li G."/>
            <person name="Shi J."/>
            <person name="Liu J."/>
            <person name="Lv H."/>
            <person name="Li J."/>
            <person name="Wang J."/>
            <person name="Deng Y."/>
            <person name="Ran L."/>
            <person name="Shi X."/>
            <person name="Wang X."/>
            <person name="Wu Q."/>
            <person name="Li C."/>
            <person name="Ren X."/>
            <person name="Wang J."/>
            <person name="Wang X."/>
            <person name="Li D."/>
            <person name="Liu D."/>
            <person name="Zhang X."/>
            <person name="Ji Z."/>
            <person name="Zhao W."/>
            <person name="Sun Y."/>
            <person name="Zhang Z."/>
            <person name="Bao J."/>
            <person name="Han Y."/>
            <person name="Dong L."/>
            <person name="Ji J."/>
            <person name="Chen P."/>
            <person name="Wu S."/>
            <person name="Liu J."/>
            <person name="Xiao Y."/>
            <person name="Bu D."/>
            <person name="Tan J."/>
            <person name="Yang L."/>
            <person name="Ye C."/>
            <person name="Zhang J."/>
            <person name="Xu J."/>
            <person name="Zhou Y."/>
            <person name="Yu Y."/>
            <person name="Zhang B."/>
            <person name="Zhuang S."/>
            <person name="Wei H."/>
            <person name="Liu B."/>
            <person name="Lei M."/>
            <person name="Yu H."/>
            <person name="Li Y."/>
            <person name="Xu H."/>
            <person name="Wei S."/>
            <person name="He X."/>
            <person name="Fang L."/>
            <person name="Zhang Z."/>
            <person name="Zhang Y."/>
            <person name="Huang X."/>
            <person name="Su Z."/>
            <person name="Tong W."/>
            <person name="Li J."/>
            <person name="Tong Z."/>
            <person name="Li S."/>
            <person name="Ye J."/>
            <person name="Wang L."/>
            <person name="Fang L."/>
            <person name="Lei T."/>
            <person name="Chen C.-S."/>
            <person name="Chen H.-C."/>
            <person name="Xu Z."/>
            <person name="Li H."/>
            <person name="Huang H."/>
            <person name="Zhang F."/>
            <person name="Xu H."/>
            <person name="Li N."/>
            <person name="Zhao C."/>
            <person name="Li S."/>
            <person name="Dong L."/>
            <person name="Huang Y."/>
            <person name="Li L."/>
            <person name="Xi Y."/>
            <person name="Qi Q."/>
            <person name="Li W."/>
            <person name="Zhang B."/>
            <person name="Hu W."/>
            <person name="Zhang Y."/>
            <person name="Tian X."/>
            <person name="Jiao Y."/>
            <person name="Liang X."/>
            <person name="Jin J."/>
            <person name="Gao L."/>
            <person name="Zheng W."/>
            <person name="Hao B."/>
            <person name="Liu S.-M."/>
            <person name="Wang W."/>
            <person name="Yuan L."/>
            <person name="Cao M."/>
            <person name="McDermott J."/>
            <person name="Samudrala R."/>
            <person name="Wang J."/>
            <person name="Wong G.K.-S."/>
            <person name="Yang H."/>
        </authorList>
    </citation>
    <scope>NUCLEOTIDE SEQUENCE [LARGE SCALE GENOMIC DNA]</scope>
    <source>
        <strain>cv. 93-11</strain>
    </source>
</reference>
<reference key="2">
    <citation type="submission" date="2003-07" db="UniProtKB">
        <title>Proteome analysis of rice anther.</title>
        <authorList>
            <person name="Salekdeh G.H."/>
            <person name="Bennett J."/>
        </authorList>
    </citation>
    <scope>PROTEIN SEQUENCE OF 79-92</scope>
    <source>
        <strain>cv. IR64</strain>
        <tissue>Anther</tissue>
    </source>
</reference>
<keyword id="KW-0903">Direct protein sequencing</keyword>
<keyword id="KW-1185">Reference proteome</keyword>
<accession>A2XAM1</accession>
<accession>P83635</accession>
<proteinExistence type="evidence at protein level"/>